<keyword id="KW-0067">ATP-binding</keyword>
<keyword id="KW-0119">Carbohydrate metabolism</keyword>
<keyword id="KW-0418">Kinase</keyword>
<keyword id="KW-0547">Nucleotide-binding</keyword>
<keyword id="KW-1185">Reference proteome</keyword>
<keyword id="KW-0808">Transferase</keyword>
<keyword id="KW-0859">Xylose metabolism</keyword>
<proteinExistence type="inferred from homology"/>
<feature type="chain" id="PRO_0000059553" description="Xylulose kinase">
    <location>
        <begin position="1"/>
        <end position="501"/>
    </location>
</feature>
<feature type="active site" description="Proton acceptor" evidence="1">
    <location>
        <position position="239"/>
    </location>
</feature>
<feature type="binding site" evidence="1">
    <location>
        <begin position="81"/>
        <end position="82"/>
    </location>
    <ligand>
        <name>substrate</name>
    </ligand>
</feature>
<feature type="site" description="Important for activity" evidence="1">
    <location>
        <position position="8"/>
    </location>
</feature>
<reference key="1">
    <citation type="journal article" date="2001" name="Genome Res.">
        <title>The complete genome sequence of the lactic acid bacterium Lactococcus lactis ssp. lactis IL1403.</title>
        <authorList>
            <person name="Bolotin A."/>
            <person name="Wincker P."/>
            <person name="Mauger S."/>
            <person name="Jaillon O."/>
            <person name="Malarme K."/>
            <person name="Weissenbach J."/>
            <person name="Ehrlich S.D."/>
            <person name="Sorokin A."/>
        </authorList>
    </citation>
    <scope>NUCLEOTIDE SEQUENCE [LARGE SCALE GENOMIC DNA]</scope>
    <source>
        <strain>IL1403</strain>
    </source>
</reference>
<organism>
    <name type="scientific">Lactococcus lactis subsp. lactis (strain IL1403)</name>
    <name type="common">Streptococcus lactis</name>
    <dbReference type="NCBI Taxonomy" id="272623"/>
    <lineage>
        <taxon>Bacteria</taxon>
        <taxon>Bacillati</taxon>
        <taxon>Bacillota</taxon>
        <taxon>Bacilli</taxon>
        <taxon>Lactobacillales</taxon>
        <taxon>Streptococcaceae</taxon>
        <taxon>Lactococcus</taxon>
    </lineage>
</organism>
<accession>Q9CFG8</accession>
<gene>
    <name evidence="1" type="primary">xylB</name>
    <name type="ordered locus">LL1508</name>
    <name type="ORF">L0231</name>
</gene>
<dbReference type="EC" id="2.7.1.17" evidence="1"/>
<dbReference type="EMBL" id="AE005176">
    <property type="protein sequence ID" value="AAK05606.1"/>
    <property type="molecule type" value="Genomic_DNA"/>
</dbReference>
<dbReference type="PIR" id="D86813">
    <property type="entry name" value="D86813"/>
</dbReference>
<dbReference type="RefSeq" id="NP_267664.1">
    <property type="nucleotide sequence ID" value="NC_002662.1"/>
</dbReference>
<dbReference type="RefSeq" id="WP_010906011.1">
    <property type="nucleotide sequence ID" value="NC_002662.1"/>
</dbReference>
<dbReference type="SMR" id="Q9CFG8"/>
<dbReference type="PaxDb" id="272623-L0231"/>
<dbReference type="EnsemblBacteria" id="AAK05606">
    <property type="protein sequence ID" value="AAK05606"/>
    <property type="gene ID" value="L0231"/>
</dbReference>
<dbReference type="KEGG" id="lla:L0231"/>
<dbReference type="PATRIC" id="fig|272623.7.peg.1618"/>
<dbReference type="eggNOG" id="COG1070">
    <property type="taxonomic scope" value="Bacteria"/>
</dbReference>
<dbReference type="HOGENOM" id="CLU_009281_3_0_9"/>
<dbReference type="OrthoDB" id="9805576at2"/>
<dbReference type="Proteomes" id="UP000002196">
    <property type="component" value="Chromosome"/>
</dbReference>
<dbReference type="GO" id="GO:0005524">
    <property type="term" value="F:ATP binding"/>
    <property type="evidence" value="ECO:0007669"/>
    <property type="project" value="UniProtKB-UniRule"/>
</dbReference>
<dbReference type="GO" id="GO:0004856">
    <property type="term" value="F:D-xylulokinase activity"/>
    <property type="evidence" value="ECO:0007669"/>
    <property type="project" value="UniProtKB-UniRule"/>
</dbReference>
<dbReference type="GO" id="GO:0042732">
    <property type="term" value="P:D-xylose metabolic process"/>
    <property type="evidence" value="ECO:0007669"/>
    <property type="project" value="UniProtKB-KW"/>
</dbReference>
<dbReference type="GO" id="GO:0005998">
    <property type="term" value="P:xylulose catabolic process"/>
    <property type="evidence" value="ECO:0007669"/>
    <property type="project" value="UniProtKB-UniRule"/>
</dbReference>
<dbReference type="CDD" id="cd07808">
    <property type="entry name" value="ASKHA_NBD_FGGY_EcXK-like"/>
    <property type="match status" value="1"/>
</dbReference>
<dbReference type="Gene3D" id="3.30.420.40">
    <property type="match status" value="2"/>
</dbReference>
<dbReference type="HAMAP" id="MF_02220">
    <property type="entry name" value="XylB"/>
    <property type="match status" value="1"/>
</dbReference>
<dbReference type="InterPro" id="IPR043129">
    <property type="entry name" value="ATPase_NBD"/>
</dbReference>
<dbReference type="InterPro" id="IPR000577">
    <property type="entry name" value="Carb_kinase_FGGY"/>
</dbReference>
<dbReference type="InterPro" id="IPR018483">
    <property type="entry name" value="Carb_kinase_FGGY_CS"/>
</dbReference>
<dbReference type="InterPro" id="IPR018485">
    <property type="entry name" value="FGGY_C"/>
</dbReference>
<dbReference type="InterPro" id="IPR050406">
    <property type="entry name" value="FGGY_Carb_Kinase"/>
</dbReference>
<dbReference type="InterPro" id="IPR018484">
    <property type="entry name" value="FGGY_N"/>
</dbReference>
<dbReference type="InterPro" id="IPR006000">
    <property type="entry name" value="Xylulokinase"/>
</dbReference>
<dbReference type="NCBIfam" id="TIGR01312">
    <property type="entry name" value="XylB"/>
    <property type="match status" value="1"/>
</dbReference>
<dbReference type="PANTHER" id="PTHR43095">
    <property type="entry name" value="SUGAR KINASE"/>
    <property type="match status" value="1"/>
</dbReference>
<dbReference type="PANTHER" id="PTHR43095:SF5">
    <property type="entry name" value="XYLULOSE KINASE"/>
    <property type="match status" value="1"/>
</dbReference>
<dbReference type="Pfam" id="PF02782">
    <property type="entry name" value="FGGY_C"/>
    <property type="match status" value="1"/>
</dbReference>
<dbReference type="Pfam" id="PF00370">
    <property type="entry name" value="FGGY_N"/>
    <property type="match status" value="1"/>
</dbReference>
<dbReference type="PIRSF" id="PIRSF000538">
    <property type="entry name" value="GlpK"/>
    <property type="match status" value="1"/>
</dbReference>
<dbReference type="SUPFAM" id="SSF53067">
    <property type="entry name" value="Actin-like ATPase domain"/>
    <property type="match status" value="2"/>
</dbReference>
<dbReference type="PROSITE" id="PS00933">
    <property type="entry name" value="FGGY_KINASES_1"/>
    <property type="match status" value="1"/>
</dbReference>
<dbReference type="PROSITE" id="PS00445">
    <property type="entry name" value="FGGY_KINASES_2"/>
    <property type="match status" value="1"/>
</dbReference>
<protein>
    <recommendedName>
        <fullName evidence="1">Xylulose kinase</fullName>
        <shortName evidence="1">Xylulokinase</shortName>
        <ecNumber evidence="1">2.7.1.17</ecNumber>
    </recommendedName>
</protein>
<name>XYLB_LACLA</name>
<evidence type="ECO:0000255" key="1">
    <source>
        <dbReference type="HAMAP-Rule" id="MF_02220"/>
    </source>
</evidence>
<evidence type="ECO:0000305" key="2"/>
<sequence length="501" mass="55814">MTYVLGIDLGTSSLKGILMDEVGNLITTKSAEYQIDTPKQGYSEQRPEYWIVALESVLTGLSVEISDFGQQLAGISFSGQMHSLVVLDDNNKPVYPAILWNDVRTSKQCQEITDRLGQRLLEITKNIALEGFTLPKILWLQENEPEVWSRVKKIMLPKDYLSLWLTGNIYTEFSDAAGTLLLDIEKKQWSEEITDAFNIDRRILPELIESTDRTGFVKAEIAERYKLTNEVKVFAGGADNAAAALGVGLINEEVGLISMGTSGVVSAYEPKIADYKGKLHFFNHTVPGACYSMGVTLAAGNSLNWYKETFGKGLSFNELLSEVYTVSPGSEGLLFTPYIVGERTPHFDSKIRGSFIGISAHHEQKHFSRAVLEGITFSLRDSKDIMEKTKNKKFKRLISVGGGAQNPDIMQMQADIFNSEMIRLTVEQGPGLGACMIAAFGCGLFDSLEAVTKAFVHYKEASFIPNPKNVARYEQIYQIWKQVYKNTSEISHQLVEFNDEG</sequence>
<comment type="function">
    <text evidence="1">Catalyzes the phosphorylation of D-xylulose to D-xylulose 5-phosphate.</text>
</comment>
<comment type="catalytic activity">
    <reaction evidence="1">
        <text>D-xylulose + ATP = D-xylulose 5-phosphate + ADP + H(+)</text>
        <dbReference type="Rhea" id="RHEA:10964"/>
        <dbReference type="ChEBI" id="CHEBI:15378"/>
        <dbReference type="ChEBI" id="CHEBI:17140"/>
        <dbReference type="ChEBI" id="CHEBI:30616"/>
        <dbReference type="ChEBI" id="CHEBI:57737"/>
        <dbReference type="ChEBI" id="CHEBI:456216"/>
        <dbReference type="EC" id="2.7.1.17"/>
    </reaction>
</comment>
<comment type="similarity">
    <text evidence="1 2">Belongs to the FGGY kinase family.</text>
</comment>